<accession>O05215</accession>
<accession>Q795C1</accession>
<feature type="chain" id="PRO_0000360855" description="Uncharacterized transporter YwrA">
    <location>
        <begin position="1"/>
        <end position="178"/>
    </location>
</feature>
<feature type="transmembrane region" description="Helical" evidence="1">
    <location>
        <begin position="1"/>
        <end position="21"/>
    </location>
</feature>
<feature type="transmembrane region" description="Helical" evidence="1">
    <location>
        <begin position="47"/>
        <end position="67"/>
    </location>
</feature>
<feature type="transmembrane region" description="Helical" evidence="1">
    <location>
        <begin position="75"/>
        <end position="95"/>
    </location>
</feature>
<feature type="transmembrane region" description="Helical" evidence="1">
    <location>
        <begin position="117"/>
        <end position="137"/>
    </location>
</feature>
<feature type="transmembrane region" description="Helical" evidence="1">
    <location>
        <begin position="158"/>
        <end position="178"/>
    </location>
</feature>
<name>YWRA_BACSU</name>
<proteinExistence type="inferred from homology"/>
<reference key="1">
    <citation type="journal article" date="1997" name="Microbiology">
        <title>The Bacillus subtilis genome from gerBC (311 degrees) to licR (334 degrees).</title>
        <authorList>
            <person name="Presecan E."/>
            <person name="Moszer I."/>
            <person name="Boursier L."/>
            <person name="Cruz Ramos H."/>
            <person name="De La Fuente V."/>
            <person name="Hullo M.-F."/>
            <person name="Lelong C."/>
            <person name="Schleich S."/>
            <person name="Sekowska A."/>
            <person name="Song B.H."/>
            <person name="Villani G."/>
            <person name="Kunst F."/>
            <person name="Danchin A."/>
            <person name="Glaser P."/>
        </authorList>
    </citation>
    <scope>NUCLEOTIDE SEQUENCE [GENOMIC DNA]</scope>
    <source>
        <strain>168</strain>
    </source>
</reference>
<reference key="2">
    <citation type="journal article" date="1997" name="Nature">
        <title>The complete genome sequence of the Gram-positive bacterium Bacillus subtilis.</title>
        <authorList>
            <person name="Kunst F."/>
            <person name="Ogasawara N."/>
            <person name="Moszer I."/>
            <person name="Albertini A.M."/>
            <person name="Alloni G."/>
            <person name="Azevedo V."/>
            <person name="Bertero M.G."/>
            <person name="Bessieres P."/>
            <person name="Bolotin A."/>
            <person name="Borchert S."/>
            <person name="Borriss R."/>
            <person name="Boursier L."/>
            <person name="Brans A."/>
            <person name="Braun M."/>
            <person name="Brignell S.C."/>
            <person name="Bron S."/>
            <person name="Brouillet S."/>
            <person name="Bruschi C.V."/>
            <person name="Caldwell B."/>
            <person name="Capuano V."/>
            <person name="Carter N.M."/>
            <person name="Choi S.-K."/>
            <person name="Codani J.-J."/>
            <person name="Connerton I.F."/>
            <person name="Cummings N.J."/>
            <person name="Daniel R.A."/>
            <person name="Denizot F."/>
            <person name="Devine K.M."/>
            <person name="Duesterhoeft A."/>
            <person name="Ehrlich S.D."/>
            <person name="Emmerson P.T."/>
            <person name="Entian K.-D."/>
            <person name="Errington J."/>
            <person name="Fabret C."/>
            <person name="Ferrari E."/>
            <person name="Foulger D."/>
            <person name="Fritz C."/>
            <person name="Fujita M."/>
            <person name="Fujita Y."/>
            <person name="Fuma S."/>
            <person name="Galizzi A."/>
            <person name="Galleron N."/>
            <person name="Ghim S.-Y."/>
            <person name="Glaser P."/>
            <person name="Goffeau A."/>
            <person name="Golightly E.J."/>
            <person name="Grandi G."/>
            <person name="Guiseppi G."/>
            <person name="Guy B.J."/>
            <person name="Haga K."/>
            <person name="Haiech J."/>
            <person name="Harwood C.R."/>
            <person name="Henaut A."/>
            <person name="Hilbert H."/>
            <person name="Holsappel S."/>
            <person name="Hosono S."/>
            <person name="Hullo M.-F."/>
            <person name="Itaya M."/>
            <person name="Jones L.-M."/>
            <person name="Joris B."/>
            <person name="Karamata D."/>
            <person name="Kasahara Y."/>
            <person name="Klaerr-Blanchard M."/>
            <person name="Klein C."/>
            <person name="Kobayashi Y."/>
            <person name="Koetter P."/>
            <person name="Koningstein G."/>
            <person name="Krogh S."/>
            <person name="Kumano M."/>
            <person name="Kurita K."/>
            <person name="Lapidus A."/>
            <person name="Lardinois S."/>
            <person name="Lauber J."/>
            <person name="Lazarevic V."/>
            <person name="Lee S.-M."/>
            <person name="Levine A."/>
            <person name="Liu H."/>
            <person name="Masuda S."/>
            <person name="Mauel C."/>
            <person name="Medigue C."/>
            <person name="Medina N."/>
            <person name="Mellado R.P."/>
            <person name="Mizuno M."/>
            <person name="Moestl D."/>
            <person name="Nakai S."/>
            <person name="Noback M."/>
            <person name="Noone D."/>
            <person name="O'Reilly M."/>
            <person name="Ogawa K."/>
            <person name="Ogiwara A."/>
            <person name="Oudega B."/>
            <person name="Park S.-H."/>
            <person name="Parro V."/>
            <person name="Pohl T.M."/>
            <person name="Portetelle D."/>
            <person name="Porwollik S."/>
            <person name="Prescott A.M."/>
            <person name="Presecan E."/>
            <person name="Pujic P."/>
            <person name="Purnelle B."/>
            <person name="Rapoport G."/>
            <person name="Rey M."/>
            <person name="Reynolds S."/>
            <person name="Rieger M."/>
            <person name="Rivolta C."/>
            <person name="Rocha E."/>
            <person name="Roche B."/>
            <person name="Rose M."/>
            <person name="Sadaie Y."/>
            <person name="Sato T."/>
            <person name="Scanlan E."/>
            <person name="Schleich S."/>
            <person name="Schroeter R."/>
            <person name="Scoffone F."/>
            <person name="Sekiguchi J."/>
            <person name="Sekowska A."/>
            <person name="Seror S.J."/>
            <person name="Serror P."/>
            <person name="Shin B.-S."/>
            <person name="Soldo B."/>
            <person name="Sorokin A."/>
            <person name="Tacconi E."/>
            <person name="Takagi T."/>
            <person name="Takahashi H."/>
            <person name="Takemaru K."/>
            <person name="Takeuchi M."/>
            <person name="Tamakoshi A."/>
            <person name="Tanaka T."/>
            <person name="Terpstra P."/>
            <person name="Tognoni A."/>
            <person name="Tosato V."/>
            <person name="Uchiyama S."/>
            <person name="Vandenbol M."/>
            <person name="Vannier F."/>
            <person name="Vassarotti A."/>
            <person name="Viari A."/>
            <person name="Wambutt R."/>
            <person name="Wedler E."/>
            <person name="Wedler H."/>
            <person name="Weitzenegger T."/>
            <person name="Winters P."/>
            <person name="Wipat A."/>
            <person name="Yamamoto H."/>
            <person name="Yamane K."/>
            <person name="Yasumoto K."/>
            <person name="Yata K."/>
            <person name="Yoshida K."/>
            <person name="Yoshikawa H.-F."/>
            <person name="Zumstein E."/>
            <person name="Yoshikawa H."/>
            <person name="Danchin A."/>
        </authorList>
    </citation>
    <scope>NUCLEOTIDE SEQUENCE [LARGE SCALE GENOMIC DNA]</scope>
    <source>
        <strain>168</strain>
    </source>
</reference>
<sequence length="178" mass="19223">MISIYLFMAFFIANLLGYGGGPASIPLMFEEVVNRYSWLSNDQFSNMLALANALPGPIATKIAAYVGYSAGGWPGFLIALIATVVPSALALIVLLRIIQRFRQSPVIKGMTLSVQPVIAVMMLILTWQIGADGIKAIGWVQSIVITGISLLAMTKFKMHPAFLIIAAFLYGGLVIPYL</sequence>
<comment type="subcellular location">
    <subcellularLocation>
        <location evidence="2">Cell membrane</location>
        <topology evidence="2">Multi-pass membrane protein</topology>
    </subcellularLocation>
</comment>
<comment type="similarity">
    <text evidence="2">Belongs to the chromate ion transporter (CHR) (TC 2.A.51) family.</text>
</comment>
<protein>
    <recommendedName>
        <fullName>Uncharacterized transporter YwrA</fullName>
    </recommendedName>
</protein>
<gene>
    <name type="primary">ywrA</name>
    <name type="ordered locus">BSU36130</name>
</gene>
<evidence type="ECO:0000255" key="1"/>
<evidence type="ECO:0000305" key="2"/>
<dbReference type="EMBL" id="Z93767">
    <property type="protein sequence ID" value="CAB07796.1"/>
    <property type="molecule type" value="Genomic_DNA"/>
</dbReference>
<dbReference type="EMBL" id="AL009126">
    <property type="protein sequence ID" value="CAB15630.1"/>
    <property type="molecule type" value="Genomic_DNA"/>
</dbReference>
<dbReference type="PIR" id="C70068">
    <property type="entry name" value="C70068"/>
</dbReference>
<dbReference type="RefSeq" id="WP_003227840.1">
    <property type="nucleotide sequence ID" value="NZ_OZ025638.1"/>
</dbReference>
<dbReference type="FunCoup" id="O05215">
    <property type="interactions" value="30"/>
</dbReference>
<dbReference type="STRING" id="224308.BSU36130"/>
<dbReference type="TCDB" id="2.A.51.1.5">
    <property type="family name" value="the chromate ion transporter (chr) family"/>
</dbReference>
<dbReference type="PaxDb" id="224308-BSU36130"/>
<dbReference type="EnsemblBacteria" id="CAB15630">
    <property type="protein sequence ID" value="CAB15630"/>
    <property type="gene ID" value="BSU_36130"/>
</dbReference>
<dbReference type="GeneID" id="936879"/>
<dbReference type="KEGG" id="bsu:BSU36130"/>
<dbReference type="PATRIC" id="fig|224308.179.peg.3910"/>
<dbReference type="eggNOG" id="COG2059">
    <property type="taxonomic scope" value="Bacteria"/>
</dbReference>
<dbReference type="InParanoid" id="O05215"/>
<dbReference type="OrthoDB" id="9027281at2"/>
<dbReference type="PhylomeDB" id="O05215"/>
<dbReference type="BioCyc" id="BSUB:BSU36130-MONOMER"/>
<dbReference type="Proteomes" id="UP000001570">
    <property type="component" value="Chromosome"/>
</dbReference>
<dbReference type="GO" id="GO:0005886">
    <property type="term" value="C:plasma membrane"/>
    <property type="evidence" value="ECO:0007669"/>
    <property type="project" value="UniProtKB-SubCell"/>
</dbReference>
<dbReference type="GO" id="GO:0015109">
    <property type="term" value="F:chromate transmembrane transporter activity"/>
    <property type="evidence" value="ECO:0007669"/>
    <property type="project" value="InterPro"/>
</dbReference>
<dbReference type="InterPro" id="IPR052518">
    <property type="entry name" value="CHR_Transporter"/>
</dbReference>
<dbReference type="InterPro" id="IPR003370">
    <property type="entry name" value="Chromate_transpt"/>
</dbReference>
<dbReference type="PANTHER" id="PTHR43663">
    <property type="entry name" value="CHROMATE TRANSPORT PROTEIN-RELATED"/>
    <property type="match status" value="1"/>
</dbReference>
<dbReference type="PANTHER" id="PTHR43663:SF1">
    <property type="entry name" value="CHROMATE TRANSPORTER"/>
    <property type="match status" value="1"/>
</dbReference>
<dbReference type="Pfam" id="PF02417">
    <property type="entry name" value="Chromate_transp"/>
    <property type="match status" value="1"/>
</dbReference>
<keyword id="KW-1003">Cell membrane</keyword>
<keyword id="KW-0472">Membrane</keyword>
<keyword id="KW-1185">Reference proteome</keyword>
<keyword id="KW-0812">Transmembrane</keyword>
<keyword id="KW-1133">Transmembrane helix</keyword>
<organism>
    <name type="scientific">Bacillus subtilis (strain 168)</name>
    <dbReference type="NCBI Taxonomy" id="224308"/>
    <lineage>
        <taxon>Bacteria</taxon>
        <taxon>Bacillati</taxon>
        <taxon>Bacillota</taxon>
        <taxon>Bacilli</taxon>
        <taxon>Bacillales</taxon>
        <taxon>Bacillaceae</taxon>
        <taxon>Bacillus</taxon>
    </lineage>
</organism>